<sequence length="106" mass="10547">MKYSLIFILTLACLIASSLARPEGEEKPADDAAGDKKEEGAEGDKTAAGGDEGFTGGDGKNAGGAGNPMKVVQDIIKKITDAVNPLRMTEGFLGGGGSGGSGALFG</sequence>
<comment type="subcellular location">
    <subcellularLocation>
        <location evidence="3">Secreted</location>
    </subcellularLocation>
</comment>
<protein>
    <recommendedName>
        <fullName>Glycine/glutamate-rich protein sgp1</fullName>
    </recommendedName>
</protein>
<keyword id="KW-0964">Secreted</keyword>
<keyword id="KW-0732">Signal</keyword>
<reference key="1">
    <citation type="journal article" date="2007" name="Insect Biochem. Mol. Biol.">
        <title>The Glossina morsitans tsetse fly saliva: general characteristics and identification of novel salivary proteins.</title>
        <authorList>
            <person name="Van Den Abbeele J."/>
            <person name="Caljon G."/>
            <person name="Dierick J.-F."/>
            <person name="Moens L."/>
            <person name="De Ridder K."/>
            <person name="Coosemans M."/>
        </authorList>
    </citation>
    <scope>NUCLEOTIDE SEQUENCE [MRNA]</scope>
    <source>
        <tissue>Salivary gland</tissue>
    </source>
</reference>
<feature type="signal peptide" evidence="1">
    <location>
        <begin position="1"/>
        <end position="20"/>
    </location>
</feature>
<feature type="chain" id="PRO_0000291613" description="Glycine/glutamate-rich protein sgp1">
    <location>
        <begin position="21"/>
        <end position="106"/>
    </location>
</feature>
<feature type="region of interest" description="Disordered" evidence="2">
    <location>
        <begin position="20"/>
        <end position="66"/>
    </location>
</feature>
<feature type="compositionally biased region" description="Basic and acidic residues" evidence="2">
    <location>
        <begin position="22"/>
        <end position="45"/>
    </location>
</feature>
<feature type="compositionally biased region" description="Gly residues" evidence="2">
    <location>
        <begin position="50"/>
        <end position="66"/>
    </location>
</feature>
<accession>A3RGB0</accession>
<gene>
    <name type="primary">sgp1</name>
</gene>
<organism>
    <name type="scientific">Glossina morsitans morsitans</name>
    <name type="common">Savannah tsetse fly</name>
    <dbReference type="NCBI Taxonomy" id="37546"/>
    <lineage>
        <taxon>Eukaryota</taxon>
        <taxon>Metazoa</taxon>
        <taxon>Ecdysozoa</taxon>
        <taxon>Arthropoda</taxon>
        <taxon>Hexapoda</taxon>
        <taxon>Insecta</taxon>
        <taxon>Pterygota</taxon>
        <taxon>Neoptera</taxon>
        <taxon>Endopterygota</taxon>
        <taxon>Diptera</taxon>
        <taxon>Brachycera</taxon>
        <taxon>Muscomorpha</taxon>
        <taxon>Hippoboscoidea</taxon>
        <taxon>Glossinidae</taxon>
        <taxon>Glossina</taxon>
    </lineage>
</organism>
<proteinExistence type="inferred from homology"/>
<name>SGP1_GLOMM</name>
<dbReference type="EMBL" id="EF398271">
    <property type="protein sequence ID" value="ABN80091.1"/>
    <property type="molecule type" value="mRNA"/>
</dbReference>
<dbReference type="SMR" id="A3RGB0"/>
<dbReference type="Proteomes" id="UP000092444">
    <property type="component" value="Unassembled WGS sequence"/>
</dbReference>
<dbReference type="GO" id="GO:0005576">
    <property type="term" value="C:extracellular region"/>
    <property type="evidence" value="ECO:0007669"/>
    <property type="project" value="UniProtKB-SubCell"/>
</dbReference>
<evidence type="ECO:0000255" key="1"/>
<evidence type="ECO:0000256" key="2">
    <source>
        <dbReference type="SAM" id="MobiDB-lite"/>
    </source>
</evidence>
<evidence type="ECO:0000305" key="3"/>